<evidence type="ECO:0000255" key="1">
    <source>
        <dbReference type="HAMAP-Rule" id="MF_00203"/>
    </source>
</evidence>
<evidence type="ECO:0000256" key="2">
    <source>
        <dbReference type="SAM" id="MobiDB-lite"/>
    </source>
</evidence>
<evidence type="ECO:0000305" key="3"/>
<reference key="1">
    <citation type="journal article" date="2006" name="Proc. Natl. Acad. Sci. U.S.A.">
        <title>Burkholderia xenovorans LB400 harbors a multi-replicon, 9.73-Mbp genome shaped for versatility.</title>
        <authorList>
            <person name="Chain P.S.G."/>
            <person name="Denef V.J."/>
            <person name="Konstantinidis K.T."/>
            <person name="Vergez L.M."/>
            <person name="Agullo L."/>
            <person name="Reyes V.L."/>
            <person name="Hauser L."/>
            <person name="Cordova M."/>
            <person name="Gomez L."/>
            <person name="Gonzalez M."/>
            <person name="Land M."/>
            <person name="Lao V."/>
            <person name="Larimer F."/>
            <person name="LiPuma J.J."/>
            <person name="Mahenthiralingam E."/>
            <person name="Malfatti S.A."/>
            <person name="Marx C.J."/>
            <person name="Parnell J.J."/>
            <person name="Ramette A."/>
            <person name="Richardson P."/>
            <person name="Seeger M."/>
            <person name="Smith D."/>
            <person name="Spilker T."/>
            <person name="Sul W.J."/>
            <person name="Tsoi T.V."/>
            <person name="Ulrich L.E."/>
            <person name="Zhulin I.B."/>
            <person name="Tiedje J.M."/>
        </authorList>
    </citation>
    <scope>NUCLEOTIDE SEQUENCE [LARGE SCALE GENOMIC DNA]</scope>
    <source>
        <strain>LB400</strain>
    </source>
</reference>
<organism>
    <name type="scientific">Paraburkholderia xenovorans (strain LB400)</name>
    <dbReference type="NCBI Taxonomy" id="266265"/>
    <lineage>
        <taxon>Bacteria</taxon>
        <taxon>Pseudomonadati</taxon>
        <taxon>Pseudomonadota</taxon>
        <taxon>Betaproteobacteria</taxon>
        <taxon>Burkholderiales</taxon>
        <taxon>Burkholderiaceae</taxon>
        <taxon>Paraburkholderia</taxon>
    </lineage>
</organism>
<keyword id="KW-0963">Cytoplasm</keyword>
<keyword id="KW-0227">DNA damage</keyword>
<keyword id="KW-0228">DNA excision</keyword>
<keyword id="KW-0234">DNA repair</keyword>
<keyword id="KW-0267">Excision nuclease</keyword>
<keyword id="KW-1185">Reference proteome</keyword>
<keyword id="KW-0742">SOS response</keyword>
<accession>Q13VN8</accession>
<comment type="function">
    <text evidence="1">The UvrABC repair system catalyzes the recognition and processing of DNA lesions. UvrC both incises the 5' and 3' sides of the lesion. The N-terminal half is responsible for the 3' incision and the C-terminal half is responsible for the 5' incision.</text>
</comment>
<comment type="subunit">
    <text evidence="1">Interacts with UvrB in an incision complex.</text>
</comment>
<comment type="subcellular location">
    <subcellularLocation>
        <location evidence="1">Cytoplasm</location>
    </subcellularLocation>
</comment>
<comment type="similarity">
    <text evidence="1">Belongs to the UvrC family.</text>
</comment>
<comment type="sequence caution" evidence="3">
    <conflict type="erroneous initiation">
        <sequence resource="EMBL-CDS" id="ABE31851"/>
    </conflict>
</comment>
<protein>
    <recommendedName>
        <fullName evidence="1">UvrABC system protein C</fullName>
        <shortName evidence="1">Protein UvrC</shortName>
    </recommendedName>
    <alternativeName>
        <fullName evidence="1">Excinuclease ABC subunit C</fullName>
    </alternativeName>
</protein>
<dbReference type="EMBL" id="CP000270">
    <property type="protein sequence ID" value="ABE31851.1"/>
    <property type="status" value="ALT_INIT"/>
    <property type="molecule type" value="Genomic_DNA"/>
</dbReference>
<dbReference type="RefSeq" id="WP_038457504.1">
    <property type="nucleotide sequence ID" value="NC_007951.1"/>
</dbReference>
<dbReference type="SMR" id="Q13VN8"/>
<dbReference type="STRING" id="266265.Bxe_A1095"/>
<dbReference type="KEGG" id="bxb:DR64_3258"/>
<dbReference type="KEGG" id="bxe:Bxe_A1095"/>
<dbReference type="PATRIC" id="fig|266265.5.peg.3476"/>
<dbReference type="eggNOG" id="COG0322">
    <property type="taxonomic scope" value="Bacteria"/>
</dbReference>
<dbReference type="OrthoDB" id="9804933at2"/>
<dbReference type="Proteomes" id="UP000001817">
    <property type="component" value="Chromosome 1"/>
</dbReference>
<dbReference type="GO" id="GO:0005737">
    <property type="term" value="C:cytoplasm"/>
    <property type="evidence" value="ECO:0007669"/>
    <property type="project" value="UniProtKB-SubCell"/>
</dbReference>
<dbReference type="GO" id="GO:0009380">
    <property type="term" value="C:excinuclease repair complex"/>
    <property type="evidence" value="ECO:0007669"/>
    <property type="project" value="InterPro"/>
</dbReference>
<dbReference type="GO" id="GO:0003677">
    <property type="term" value="F:DNA binding"/>
    <property type="evidence" value="ECO:0007669"/>
    <property type="project" value="UniProtKB-UniRule"/>
</dbReference>
<dbReference type="GO" id="GO:0009381">
    <property type="term" value="F:excinuclease ABC activity"/>
    <property type="evidence" value="ECO:0007669"/>
    <property type="project" value="UniProtKB-UniRule"/>
</dbReference>
<dbReference type="GO" id="GO:0006289">
    <property type="term" value="P:nucleotide-excision repair"/>
    <property type="evidence" value="ECO:0007669"/>
    <property type="project" value="UniProtKB-UniRule"/>
</dbReference>
<dbReference type="GO" id="GO:0009432">
    <property type="term" value="P:SOS response"/>
    <property type="evidence" value="ECO:0007669"/>
    <property type="project" value="UniProtKB-UniRule"/>
</dbReference>
<dbReference type="CDD" id="cd10434">
    <property type="entry name" value="GIY-YIG_UvrC_Cho"/>
    <property type="match status" value="1"/>
</dbReference>
<dbReference type="FunFam" id="3.40.1440.10:FF:000001">
    <property type="entry name" value="UvrABC system protein C"/>
    <property type="match status" value="1"/>
</dbReference>
<dbReference type="Gene3D" id="1.10.150.20">
    <property type="entry name" value="5' to 3' exonuclease, C-terminal subdomain"/>
    <property type="match status" value="1"/>
</dbReference>
<dbReference type="Gene3D" id="3.40.1440.10">
    <property type="entry name" value="GIY-YIG endonuclease"/>
    <property type="match status" value="1"/>
</dbReference>
<dbReference type="Gene3D" id="4.10.860.10">
    <property type="entry name" value="UVR domain"/>
    <property type="match status" value="1"/>
</dbReference>
<dbReference type="Gene3D" id="3.30.420.340">
    <property type="entry name" value="UvrC, RNAse H endonuclease domain"/>
    <property type="match status" value="1"/>
</dbReference>
<dbReference type="HAMAP" id="MF_00203">
    <property type="entry name" value="UvrC"/>
    <property type="match status" value="1"/>
</dbReference>
<dbReference type="InterPro" id="IPR000305">
    <property type="entry name" value="GIY-YIG_endonuc"/>
</dbReference>
<dbReference type="InterPro" id="IPR035901">
    <property type="entry name" value="GIY-YIG_endonuc_sf"/>
</dbReference>
<dbReference type="InterPro" id="IPR047296">
    <property type="entry name" value="GIY-YIG_UvrC_Cho"/>
</dbReference>
<dbReference type="InterPro" id="IPR003583">
    <property type="entry name" value="Hlx-hairpin-Hlx_DNA-bd_motif"/>
</dbReference>
<dbReference type="InterPro" id="IPR010994">
    <property type="entry name" value="RuvA_2-like"/>
</dbReference>
<dbReference type="InterPro" id="IPR001943">
    <property type="entry name" value="UVR_dom"/>
</dbReference>
<dbReference type="InterPro" id="IPR036876">
    <property type="entry name" value="UVR_dom_sf"/>
</dbReference>
<dbReference type="InterPro" id="IPR050066">
    <property type="entry name" value="UvrABC_protein_C"/>
</dbReference>
<dbReference type="InterPro" id="IPR004791">
    <property type="entry name" value="UvrC"/>
</dbReference>
<dbReference type="InterPro" id="IPR001162">
    <property type="entry name" value="UvrC_RNase_H_dom"/>
</dbReference>
<dbReference type="InterPro" id="IPR038476">
    <property type="entry name" value="UvrC_RNase_H_dom_sf"/>
</dbReference>
<dbReference type="NCBIfam" id="NF001824">
    <property type="entry name" value="PRK00558.1-5"/>
    <property type="match status" value="1"/>
</dbReference>
<dbReference type="NCBIfam" id="TIGR00194">
    <property type="entry name" value="uvrC"/>
    <property type="match status" value="1"/>
</dbReference>
<dbReference type="PANTHER" id="PTHR30562:SF1">
    <property type="entry name" value="UVRABC SYSTEM PROTEIN C"/>
    <property type="match status" value="1"/>
</dbReference>
<dbReference type="PANTHER" id="PTHR30562">
    <property type="entry name" value="UVRC/OXIDOREDUCTASE"/>
    <property type="match status" value="1"/>
</dbReference>
<dbReference type="Pfam" id="PF01541">
    <property type="entry name" value="GIY-YIG"/>
    <property type="match status" value="1"/>
</dbReference>
<dbReference type="Pfam" id="PF14520">
    <property type="entry name" value="HHH_5"/>
    <property type="match status" value="1"/>
</dbReference>
<dbReference type="Pfam" id="PF02151">
    <property type="entry name" value="UVR"/>
    <property type="match status" value="1"/>
</dbReference>
<dbReference type="Pfam" id="PF22920">
    <property type="entry name" value="UvrC_RNaseH"/>
    <property type="match status" value="2"/>
</dbReference>
<dbReference type="Pfam" id="PF08459">
    <property type="entry name" value="UvrC_RNaseH_dom"/>
    <property type="match status" value="1"/>
</dbReference>
<dbReference type="SMART" id="SM00465">
    <property type="entry name" value="GIYc"/>
    <property type="match status" value="1"/>
</dbReference>
<dbReference type="SMART" id="SM00278">
    <property type="entry name" value="HhH1"/>
    <property type="match status" value="2"/>
</dbReference>
<dbReference type="SUPFAM" id="SSF46600">
    <property type="entry name" value="C-terminal UvrC-binding domain of UvrB"/>
    <property type="match status" value="1"/>
</dbReference>
<dbReference type="SUPFAM" id="SSF82771">
    <property type="entry name" value="GIY-YIG endonuclease"/>
    <property type="match status" value="1"/>
</dbReference>
<dbReference type="SUPFAM" id="SSF47781">
    <property type="entry name" value="RuvA domain 2-like"/>
    <property type="match status" value="1"/>
</dbReference>
<dbReference type="PROSITE" id="PS50164">
    <property type="entry name" value="GIY_YIG"/>
    <property type="match status" value="1"/>
</dbReference>
<dbReference type="PROSITE" id="PS50151">
    <property type="entry name" value="UVR"/>
    <property type="match status" value="1"/>
</dbReference>
<dbReference type="PROSITE" id="PS50165">
    <property type="entry name" value="UVRC"/>
    <property type="match status" value="1"/>
</dbReference>
<gene>
    <name evidence="1" type="primary">uvrC</name>
    <name type="ordered locus">Bxeno_A3313</name>
    <name type="ORF">Bxe_A1095</name>
</gene>
<name>UVRC_PARXL</name>
<proteinExistence type="inferred from homology"/>
<feature type="chain" id="PRO_0000264881" description="UvrABC system protein C">
    <location>
        <begin position="1"/>
        <end position="734"/>
    </location>
</feature>
<feature type="domain" description="GIY-YIG" evidence="1">
    <location>
        <begin position="21"/>
        <end position="99"/>
    </location>
</feature>
<feature type="domain" description="UVR" evidence="1">
    <location>
        <begin position="208"/>
        <end position="243"/>
    </location>
</feature>
<feature type="region of interest" description="Disordered" evidence="2">
    <location>
        <begin position="345"/>
        <end position="386"/>
    </location>
</feature>
<feature type="compositionally biased region" description="Acidic residues" evidence="2">
    <location>
        <begin position="346"/>
        <end position="365"/>
    </location>
</feature>
<sequence>MTEPEATDVFEPKKVLTQLPHLPGVYRYYDTHGAVLYVGKARDLKKRVSSYFTKTQLSPRIAMMVTRIARVETTVTRSEAEALLLENNLIKALAPRYNILFRDDKSYPYLKLTGHKFPRMAYYRGAVDRKNQYFGPFPSAWAVRESIQILQRVFQLRTCEDSVFNNRTRPCLLHQIGRCTAPCVAAISEEDYARDVANASRFLLGRQGEVMSELEQKMHAFASELKFEQAAAVRNQMSSLSTVLHQQAIEVGSDSDVDILAVVALGGRVCVNLAMVRGGRHLGDKAYFPAHVESALTVDEGGLEDGDERLADAATGPVSLAEEEVGGEAEPADTADALAIARDMPPEDEQDEDEDEDEQDGEPEEAGSGADSDSDSAKPRKGRATGGIESEVLEAFIAQHYLGNRVPPVLVVSHAPATRELVDVLIEQAGHKVTVLRQPQGQRRAWLVMAEQNARLALARLLSEQGSQQARTRALTDTLGMECDDLAHLRIECFDISHTMGEATQASCVVYHHHKMQSSEYRRYNITGITPGDDYAAMRQVLTRRYEKMVAQAAANAADEAAELQSDAAADPSLAPDAAEPVAAGGVLPTIVLIDGGKGQVEIARQVFTELGLDTGMLVGVAKGEGRKVGLETLIFADGRAPLELGKESAALMLVAQIRDEAHRFAITGMRAKRGKTRQTSRLEELEGVGAKRRQRLLARFGGLRGVVAASVEDLASVEGISQALAEQIYRQLH</sequence>